<gene>
    <name evidence="12 17" type="primary">scu</name>
    <name evidence="12" type="synonym">MRPP2</name>
    <name evidence="17" type="ORF">CG7113</name>
</gene>
<name>HCD2_DROME</name>
<sequence length="255" mass="26905">MIKNAVSLVTGGASGLGRATAERLAKQGASVILADLPSSKGNEVAKELGDKVVFVPVDVTSEKDVSAALQTAKDKFGRLDLTVNCAGTATAVKTFNFNKNVAHRLEDFQRVININTVGTFNVIRLSAGLMGANEPNQDGQRGVIVNTASVAAFDGQIGQAAYSASKAAVVGMTLPIARDLSTQGIRICTIAPGLFNTPMLAALPEKVRTFLAKSIPFPQRLGEPSEYAHLVQAIYENPLLNGEVIRIDGALRMMP</sequence>
<accession>O18404</accession>
<accession>D5A7S2</accession>
<accession>G7H840</accession>
<accession>Q059C3</accession>
<accession>Q8MRC1</accession>
<organism>
    <name type="scientific">Drosophila melanogaster</name>
    <name type="common">Fruit fly</name>
    <dbReference type="NCBI Taxonomy" id="7227"/>
    <lineage>
        <taxon>Eukaryota</taxon>
        <taxon>Metazoa</taxon>
        <taxon>Ecdysozoa</taxon>
        <taxon>Arthropoda</taxon>
        <taxon>Hexapoda</taxon>
        <taxon>Insecta</taxon>
        <taxon>Pterygota</taxon>
        <taxon>Neoptera</taxon>
        <taxon>Endopterygota</taxon>
        <taxon>Diptera</taxon>
        <taxon>Brachycera</taxon>
        <taxon>Muscomorpha</taxon>
        <taxon>Ephydroidea</taxon>
        <taxon>Drosophilidae</taxon>
        <taxon>Drosophila</taxon>
        <taxon>Sophophora</taxon>
    </lineage>
</organism>
<proteinExistence type="evidence at protein level"/>
<comment type="function">
    <text evidence="4 7 8 9 10 16">Mitochondrial dehydrogenase involved in pathways of fatty acid, and steroid metabolism (PubMed:12917011). Versatile enzyme presenting two types of activity; L-3-hydroxyacyl-CoA dehydrogenase ((3S)-3-hydroxyacyl-CoA dehydrogenase) activity and hydroxysteroid dehydrogenase (HSD) activity with a wide substrate spectrum. As a (3S)-3-hydroxyacyl-CoA dehydrogenase, it functions in the third step of the fatty acid beta-oxidation pathway, a major metabolic process in which fatty acids are oxidized to provide a significant source of energy, while also generating acyl-CoA metabolites used by many metabolic routes (Probable) (PubMed:12917011). As a HSD, it functions in the degradation pathways of glucocorticoids and sex steroids and epimerization of bile acids; catalyzes the beta-oxidation at position 17 of androgens and estrogens, has 3-alpha-hydroxysteroid dehydrogenase activity with androsterone, and carries out oxidative conversions of 7-beta-hydroxylated bile acids like ursodeoxycholate or isoursodeoxycholate (also known as 3-beta,7-beta-dihydroxy-5-beta-cholan-24-oate or 7-beta-hydroxyisolithocholate, respectively). Also exhibits 20-beta-OH and 21-OH dehydrogenase activities with C21 steroids (PubMed:12917011). Essential for structural and functional integrity of mitochondria (PubMed:27131785, PubMed:34199774, PubMed:35663400). Required for cell survival during embryonic development (PubMed:9585418). May play a role in germline formation (PubMed:12917011, PubMed:9585418).</text>
</comment>
<comment type="function">
    <text evidence="7 8 9">In addition to mitochondrial dehydrogenase activity, moonlights as a component of mitochondrial ribonuclease P, a complex that cleaves tRNA molecules in their 5'-ends (PubMed:27131785, PubMed:34199774, PubMed:35663400). Essential for the structural and functional integrity of mitochondria (PubMed:27131785, PubMed:34199774, PubMed:35663400). Function is essential for pupal development (PubMed:27131785, PubMed:34199774).</text>
</comment>
<comment type="catalytic activity">
    <reaction evidence="4">
        <text>a (3S)-3-hydroxyacyl-CoA + NAD(+) = a 3-oxoacyl-CoA + NADH + H(+)</text>
        <dbReference type="Rhea" id="RHEA:22432"/>
        <dbReference type="ChEBI" id="CHEBI:15378"/>
        <dbReference type="ChEBI" id="CHEBI:57318"/>
        <dbReference type="ChEBI" id="CHEBI:57540"/>
        <dbReference type="ChEBI" id="CHEBI:57945"/>
        <dbReference type="ChEBI" id="CHEBI:90726"/>
        <dbReference type="EC" id="1.1.1.35"/>
    </reaction>
    <physiologicalReaction direction="left-to-right" evidence="4">
        <dbReference type="Rhea" id="RHEA:22433"/>
    </physiologicalReaction>
    <physiologicalReaction direction="right-to-left" evidence="4">
        <dbReference type="Rhea" id="RHEA:22434"/>
    </physiologicalReaction>
</comment>
<comment type="catalytic activity">
    <reaction evidence="4">
        <text>(3S)-3-hydroxybutanoyl-CoA + NAD(+) = acetoacetyl-CoA + NADH + H(+)</text>
        <dbReference type="Rhea" id="RHEA:30799"/>
        <dbReference type="ChEBI" id="CHEBI:15378"/>
        <dbReference type="ChEBI" id="CHEBI:57286"/>
        <dbReference type="ChEBI" id="CHEBI:57316"/>
        <dbReference type="ChEBI" id="CHEBI:57540"/>
        <dbReference type="ChEBI" id="CHEBI:57945"/>
    </reaction>
    <physiologicalReaction direction="left-to-right" evidence="4">
        <dbReference type="Rhea" id="RHEA:30800"/>
    </physiologicalReaction>
    <physiologicalReaction direction="right-to-left" evidence="4">
        <dbReference type="Rhea" id="RHEA:30801"/>
    </physiologicalReaction>
</comment>
<comment type="catalytic activity">
    <reaction evidence="4">
        <text>testosterone + NAD(+) = androst-4-ene-3,17-dione + NADH + H(+)</text>
        <dbReference type="Rhea" id="RHEA:14929"/>
        <dbReference type="ChEBI" id="CHEBI:15378"/>
        <dbReference type="ChEBI" id="CHEBI:16422"/>
        <dbReference type="ChEBI" id="CHEBI:17347"/>
        <dbReference type="ChEBI" id="CHEBI:57540"/>
        <dbReference type="ChEBI" id="CHEBI:57945"/>
        <dbReference type="EC" id="1.1.1.51"/>
    </reaction>
    <physiologicalReaction direction="left-to-right" evidence="4">
        <dbReference type="Rhea" id="RHEA:14930"/>
    </physiologicalReaction>
</comment>
<comment type="catalytic activity">
    <reaction evidence="4">
        <text>5alpha-androstane-3alpha,17beta-diol + NAD(+) = 17beta-hydroxy-5alpha-androstan-3-one + NADH + H(+)</text>
        <dbReference type="Rhea" id="RHEA:42004"/>
        <dbReference type="ChEBI" id="CHEBI:15378"/>
        <dbReference type="ChEBI" id="CHEBI:16330"/>
        <dbReference type="ChEBI" id="CHEBI:36713"/>
        <dbReference type="ChEBI" id="CHEBI:57540"/>
        <dbReference type="ChEBI" id="CHEBI:57945"/>
        <dbReference type="EC" id="1.1.1.53"/>
    </reaction>
    <physiologicalReaction direction="right-to-left" evidence="4">
        <dbReference type="Rhea" id="RHEA:42006"/>
    </physiologicalReaction>
</comment>
<comment type="catalytic activity">
    <reaction evidence="4">
        <text>17beta-estradiol + NAD(+) = estrone + NADH + H(+)</text>
        <dbReference type="Rhea" id="RHEA:24612"/>
        <dbReference type="ChEBI" id="CHEBI:15378"/>
        <dbReference type="ChEBI" id="CHEBI:16469"/>
        <dbReference type="ChEBI" id="CHEBI:17263"/>
        <dbReference type="ChEBI" id="CHEBI:57540"/>
        <dbReference type="ChEBI" id="CHEBI:57945"/>
        <dbReference type="EC" id="1.1.1.62"/>
    </reaction>
    <physiologicalReaction direction="left-to-right" evidence="4">
        <dbReference type="Rhea" id="RHEA:24613"/>
    </physiologicalReaction>
</comment>
<comment type="catalytic activity">
    <reaction evidence="4">
        <text>ursodeoxycholate + NAD(+) = 7-oxolithocholate + NADH + H(+)</text>
        <dbReference type="Rhea" id="RHEA:42028"/>
        <dbReference type="ChEBI" id="CHEBI:15378"/>
        <dbReference type="ChEBI" id="CHEBI:57540"/>
        <dbReference type="ChEBI" id="CHEBI:57945"/>
        <dbReference type="ChEBI" id="CHEBI:78604"/>
        <dbReference type="ChEBI" id="CHEBI:78605"/>
    </reaction>
    <physiologicalReaction direction="left-to-right" evidence="4">
        <dbReference type="Rhea" id="RHEA:42029"/>
    </physiologicalReaction>
</comment>
<comment type="catalytic activity">
    <reaction evidence="4">
        <text>3beta,7beta-dihydroxy-5beta-cholan-24-oate + NAD(+) = 3beta-hydroxy-7-oxo-5beta-cholan-24-oate + NADH + H(+)</text>
        <dbReference type="Rhea" id="RHEA:42024"/>
        <dbReference type="ChEBI" id="CHEBI:15378"/>
        <dbReference type="ChEBI" id="CHEBI:57540"/>
        <dbReference type="ChEBI" id="CHEBI:57945"/>
        <dbReference type="ChEBI" id="CHEBI:78602"/>
        <dbReference type="ChEBI" id="CHEBI:78603"/>
    </reaction>
    <physiologicalReaction direction="left-to-right" evidence="4">
        <dbReference type="Rhea" id="RHEA:42025"/>
    </physiologicalReaction>
</comment>
<comment type="catalytic activity">
    <reaction evidence="4">
        <text>11-dehydrocorticosterone + NAD(+) = pregn-4-ene-3,11,20,21-tetraone + NADH + H(+)</text>
        <dbReference type="Rhea" id="RHEA:42020"/>
        <dbReference type="ChEBI" id="CHEBI:15378"/>
        <dbReference type="ChEBI" id="CHEBI:57540"/>
        <dbReference type="ChEBI" id="CHEBI:57945"/>
        <dbReference type="ChEBI" id="CHEBI:78600"/>
        <dbReference type="ChEBI" id="CHEBI:78601"/>
    </reaction>
    <physiologicalReaction direction="left-to-right" evidence="4">
        <dbReference type="Rhea" id="RHEA:42021"/>
    </physiologicalReaction>
</comment>
<comment type="catalytic activity">
    <reaction evidence="4">
        <text>cortisone + NAD(+) = 17alpha-hydroxypregn-4-en-3,11,20-trione-21-al + NADH + H(+)</text>
        <dbReference type="Rhea" id="RHEA:42016"/>
        <dbReference type="ChEBI" id="CHEBI:15378"/>
        <dbReference type="ChEBI" id="CHEBI:16962"/>
        <dbReference type="ChEBI" id="CHEBI:57540"/>
        <dbReference type="ChEBI" id="CHEBI:57945"/>
        <dbReference type="ChEBI" id="CHEBI:78596"/>
    </reaction>
    <physiologicalReaction direction="left-to-right" evidence="4">
        <dbReference type="Rhea" id="RHEA:42017"/>
    </physiologicalReaction>
</comment>
<comment type="catalytic activity">
    <reaction evidence="4">
        <text>cortisol + NAD(+) = 11beta,17alpha-dihydroxypregn-4-ene-3,20,21-trione + NADH + H(+)</text>
        <dbReference type="Rhea" id="RHEA:42012"/>
        <dbReference type="ChEBI" id="CHEBI:15378"/>
        <dbReference type="ChEBI" id="CHEBI:17650"/>
        <dbReference type="ChEBI" id="CHEBI:57540"/>
        <dbReference type="ChEBI" id="CHEBI:57945"/>
        <dbReference type="ChEBI" id="CHEBI:78595"/>
    </reaction>
    <physiologicalReaction direction="left-to-right" evidence="4">
        <dbReference type="Rhea" id="RHEA:42013"/>
    </physiologicalReaction>
</comment>
<comment type="catalytic activity">
    <reaction evidence="4">
        <text>5alpha-pregnan-20beta-ol-3-one + NAD(+) = 5alpha-pregnane-3,20-dione + NADH + H(+)</text>
        <dbReference type="Rhea" id="RHEA:42008"/>
        <dbReference type="ChEBI" id="CHEBI:15378"/>
        <dbReference type="ChEBI" id="CHEBI:28952"/>
        <dbReference type="ChEBI" id="CHEBI:57540"/>
        <dbReference type="ChEBI" id="CHEBI:57945"/>
        <dbReference type="ChEBI" id="CHEBI:78594"/>
    </reaction>
    <physiologicalReaction direction="left-to-right" evidence="4">
        <dbReference type="Rhea" id="RHEA:42009"/>
    </physiologicalReaction>
</comment>
<comment type="catalytic activity">
    <reaction evidence="4">
        <text>17beta-hydroxy-5alpha-androstan-3-one + NAD(+) = 5alpha-androstan-3,17-dione + NADH + H(+)</text>
        <dbReference type="Rhea" id="RHEA:41992"/>
        <dbReference type="ChEBI" id="CHEBI:15378"/>
        <dbReference type="ChEBI" id="CHEBI:15994"/>
        <dbReference type="ChEBI" id="CHEBI:16330"/>
        <dbReference type="ChEBI" id="CHEBI:57540"/>
        <dbReference type="ChEBI" id="CHEBI:57945"/>
    </reaction>
    <physiologicalReaction direction="left-to-right" evidence="4">
        <dbReference type="Rhea" id="RHEA:41993"/>
    </physiologicalReaction>
</comment>
<comment type="biophysicochemical properties">
    <kinetics>
        <KM evidence="4">33.7 uM for acetoacetyl-CoA (in the presence of 0.2 mM NADH, at pH 6.4 and 25 degrees Celsius)</KM>
        <KM evidence="4">101 uM for (3S)-3-hydroxybutanoyl-CoA (beta-hydroxybutyryl-CoA) (in the presence of 1 mM NAD, at pH 9.3 and 25 degrees Celsius)</KM>
        <KM evidence="4">37.3 uM for androsterone (in the presence of 1 mM NAD, at pH 9.3 and 25 degrees Celsius)</KM>
        <KM evidence="4">12.3 uM for 17beta-hydroxy-5alpha-androstan-3-one (5-alpha-dihydrotestosterone) (in the presence of 0.2 mM NADH, at pH 6.4 and 25 degrees Celsius)</KM>
        <KM evidence="4">11.1 uM for 17-beta-estradiol (in the presence of 1 mM NAD, at pH 9.3 and 25 degrees Celsius)</KM>
        <KM evidence="4">9 uM for 5alpha-pregnan-20beta-ol-3-one (in the presence of 1 mM NAD, at pH 9.3 and 25 degrees Celsius)</KM>
        <KM evidence="4">3 uM for 3beta,7beta-dihydroxy-5beta-cholan-24-oate (also known as isoursodeoxycholate or 7beta-hydroxyisolithocholate) (in the presence of 1 mM NAD, at pH 9.3 and 25 degrees Celsius)</KM>
        <KM evidence="4">32.5 uM for NADH (in the presence of acetoacetyl-CoA, at pH 7.0 and 25 degrees Celsius)</KM>
        <KM evidence="4">64.4 uM for NAD (in the presence of (3S)-3-hydroxybutanoyl-CoA, at pH 9.3 and 25 degrees Celsius)</KM>
        <KM evidence="4">124 uM for NAD (in the presence of aldosterone, at pH 9.3 and 25 degrees Celsius)</KM>
    </kinetics>
    <phDependence>
        <text evidence="4">Optimum pH is 9.3 for the dehydrogenase reaction, and 6.4 for the reductase reaction.</text>
    </phDependence>
</comment>
<comment type="subunit">
    <text evidence="7 8">Component of mitochondrial ribonuclease P, a complex composed of rswl/MRPP1, scu/MRPP2 and mldr/MRPP3.</text>
</comment>
<comment type="subcellular location">
    <subcellularLocation>
        <location evidence="7 8">Mitochondrion</location>
    </subcellularLocation>
    <text evidence="5">Localizes to the lipid droplet fraction in early embryos (PubMed:16979555).</text>
</comment>
<comment type="tissue specificity">
    <text evidence="10">Found in many tissues including CNS, imaginal disks and salivary glands. Highest expression in both embryonic gonadal primordia and mature ovaries and testes.</text>
</comment>
<comment type="developmental stage">
    <text evidence="10">Expressed throughout embryonic development. In adults, expression is higher in females than in males.</text>
</comment>
<comment type="induction">
    <text evidence="6">By 20-hydroxyecdysone.</text>
</comment>
<comment type="disruption phenotype">
    <text evidence="7 8 9 10">Embryonic and pupal lethal (PubMed:34199774, PubMed:9585418). Pupation is developmentally delayed and pupae fail to enclose into adults (PubMed:34199774). Males, before the onset of lethality, have small testes and degenerating spermatocytes with a large accumulation of small fat-containing vesicles in the cytoplasm and almost no mitochondria (PubMed:9585418). Photoreceptors fail to differentiate normally, are unable to form proper rhabdomeres and contain smaller mitochondria with swollen crestae (PubMed:9585418). Larvae display reduced ATP and mitochondrial morphological defects, that are indicative of mitochondrial dysfunction (PubMed:34199774). RNAi-mediated knockdown is pupal lethal, with the majority of pupae undergoing pupation but then all fail to enclose into adults (PubMed:27131785). Larvae also display reduced levels of ATP (PubMed:27131785). Conditional RNAi-mediated knockdown in different tissues, produce various phenotypes that result from adherent, dysfunctional mitochondria (PubMed:27131785, PubMed:35663400). RNAi-mediated knockdown in skeletal muscle is pharate pupal lethal (PubMed:35663400). Reduces sarcomere size, and affects myofibril organization and structure, resulting in abnormal wing posture (PubMed:35663400). Cardiac-specific RNAi-mediated knockdown reduces lifespan and results in adult wing defects (PubMed:35663400). Adult hearts display impaired contractility but heart rhythm is not affected (PubMed:35663400). RNAi-mediated knockdown in dopaminergic neurons has no effect on climbing ability (PubMed:27131785).</text>
</comment>
<comment type="similarity">
    <text evidence="14">Belongs to the short-chain dehydrogenases/reductases (SDR) family.</text>
</comment>
<comment type="sequence caution" evidence="14">
    <conflict type="erroneous initiation">
        <sequence resource="EMBL-CDS" id="ADE60673"/>
    </conflict>
    <text>Extended N-terminus.</text>
</comment>
<comment type="sequence caution" evidence="14">
    <conflict type="erroneous initiation">
        <sequence resource="EMBL-CDS" id="AET07646"/>
    </conflict>
    <text>Extended N-terminus.</text>
</comment>
<comment type="sequence caution" evidence="14">
    <conflict type="erroneous initiation">
        <sequence resource="EMBL-CDS" id="AFH07442"/>
    </conflict>
    <text>Extended N-terminus.</text>
</comment>
<keyword id="KW-0496">Mitochondrion</keyword>
<keyword id="KW-0520">NAD</keyword>
<keyword id="KW-0560">Oxidoreductase</keyword>
<keyword id="KW-1185">Reference proteome</keyword>
<keyword id="KW-0819">tRNA processing</keyword>
<reference key="1">
    <citation type="journal article" date="1998" name="J. Cell Biol.">
        <title>Scully, an essential gene of Drosophila, is homologous to mammalian mitochondrial type II L-3-hydroxyacyl-CoA dehydrogenase/amyloid-beta peptide-binding protein.</title>
        <authorList>
            <person name="Torroja L."/>
            <person name="Ortuno-Sahagun D."/>
            <person name="Ferrus A."/>
            <person name="Haemmerle B."/>
            <person name="Barbas J.A."/>
        </authorList>
    </citation>
    <scope>NUCLEOTIDE SEQUENCE [MRNA]</scope>
    <scope>FUNCTION</scope>
    <scope>TISSUE SPECIFICITY</scope>
    <scope>DEVELOPMENTAL STAGE</scope>
    <scope>DISRUPTION PHENOTYPE</scope>
    <scope>MUTAGENESIS OF LEU-33 AND PHE-120</scope>
    <source>
        <strain>Canton-S</strain>
    </source>
</reference>
<reference key="2">
    <citation type="journal article" date="2000" name="Science">
        <title>The genome sequence of Drosophila melanogaster.</title>
        <authorList>
            <person name="Adams M.D."/>
            <person name="Celniker S.E."/>
            <person name="Holt R.A."/>
            <person name="Evans C.A."/>
            <person name="Gocayne J.D."/>
            <person name="Amanatides P.G."/>
            <person name="Scherer S.E."/>
            <person name="Li P.W."/>
            <person name="Hoskins R.A."/>
            <person name="Galle R.F."/>
            <person name="George R.A."/>
            <person name="Lewis S.E."/>
            <person name="Richards S."/>
            <person name="Ashburner M."/>
            <person name="Henderson S.N."/>
            <person name="Sutton G.G."/>
            <person name="Wortman J.R."/>
            <person name="Yandell M.D."/>
            <person name="Zhang Q."/>
            <person name="Chen L.X."/>
            <person name="Brandon R.C."/>
            <person name="Rogers Y.-H.C."/>
            <person name="Blazej R.G."/>
            <person name="Champe M."/>
            <person name="Pfeiffer B.D."/>
            <person name="Wan K.H."/>
            <person name="Doyle C."/>
            <person name="Baxter E.G."/>
            <person name="Helt G."/>
            <person name="Nelson C.R."/>
            <person name="Miklos G.L.G."/>
            <person name="Abril J.F."/>
            <person name="Agbayani A."/>
            <person name="An H.-J."/>
            <person name="Andrews-Pfannkoch C."/>
            <person name="Baldwin D."/>
            <person name="Ballew R.M."/>
            <person name="Basu A."/>
            <person name="Baxendale J."/>
            <person name="Bayraktaroglu L."/>
            <person name="Beasley E.M."/>
            <person name="Beeson K.Y."/>
            <person name="Benos P.V."/>
            <person name="Berman B.P."/>
            <person name="Bhandari D."/>
            <person name="Bolshakov S."/>
            <person name="Borkova D."/>
            <person name="Botchan M.R."/>
            <person name="Bouck J."/>
            <person name="Brokstein P."/>
            <person name="Brottier P."/>
            <person name="Burtis K.C."/>
            <person name="Busam D.A."/>
            <person name="Butler H."/>
            <person name="Cadieu E."/>
            <person name="Center A."/>
            <person name="Chandra I."/>
            <person name="Cherry J.M."/>
            <person name="Cawley S."/>
            <person name="Dahlke C."/>
            <person name="Davenport L.B."/>
            <person name="Davies P."/>
            <person name="de Pablos B."/>
            <person name="Delcher A."/>
            <person name="Deng Z."/>
            <person name="Mays A.D."/>
            <person name="Dew I."/>
            <person name="Dietz S.M."/>
            <person name="Dodson K."/>
            <person name="Doup L.E."/>
            <person name="Downes M."/>
            <person name="Dugan-Rocha S."/>
            <person name="Dunkov B.C."/>
            <person name="Dunn P."/>
            <person name="Durbin K.J."/>
            <person name="Evangelista C.C."/>
            <person name="Ferraz C."/>
            <person name="Ferriera S."/>
            <person name="Fleischmann W."/>
            <person name="Fosler C."/>
            <person name="Gabrielian A.E."/>
            <person name="Garg N.S."/>
            <person name="Gelbart W.M."/>
            <person name="Glasser K."/>
            <person name="Glodek A."/>
            <person name="Gong F."/>
            <person name="Gorrell J.H."/>
            <person name="Gu Z."/>
            <person name="Guan P."/>
            <person name="Harris M."/>
            <person name="Harris N.L."/>
            <person name="Harvey D.A."/>
            <person name="Heiman T.J."/>
            <person name="Hernandez J.R."/>
            <person name="Houck J."/>
            <person name="Hostin D."/>
            <person name="Houston K.A."/>
            <person name="Howland T.J."/>
            <person name="Wei M.-H."/>
            <person name="Ibegwam C."/>
            <person name="Jalali M."/>
            <person name="Kalush F."/>
            <person name="Karpen G.H."/>
            <person name="Ke Z."/>
            <person name="Kennison J.A."/>
            <person name="Ketchum K.A."/>
            <person name="Kimmel B.E."/>
            <person name="Kodira C.D."/>
            <person name="Kraft C.L."/>
            <person name="Kravitz S."/>
            <person name="Kulp D."/>
            <person name="Lai Z."/>
            <person name="Lasko P."/>
            <person name="Lei Y."/>
            <person name="Levitsky A.A."/>
            <person name="Li J.H."/>
            <person name="Li Z."/>
            <person name="Liang Y."/>
            <person name="Lin X."/>
            <person name="Liu X."/>
            <person name="Mattei B."/>
            <person name="McIntosh T.C."/>
            <person name="McLeod M.P."/>
            <person name="McPherson D."/>
            <person name="Merkulov G."/>
            <person name="Milshina N.V."/>
            <person name="Mobarry C."/>
            <person name="Morris J."/>
            <person name="Moshrefi A."/>
            <person name="Mount S.M."/>
            <person name="Moy M."/>
            <person name="Murphy B."/>
            <person name="Murphy L."/>
            <person name="Muzny D.M."/>
            <person name="Nelson D.L."/>
            <person name="Nelson D.R."/>
            <person name="Nelson K.A."/>
            <person name="Nixon K."/>
            <person name="Nusskern D.R."/>
            <person name="Pacleb J.M."/>
            <person name="Palazzolo M."/>
            <person name="Pittman G.S."/>
            <person name="Pan S."/>
            <person name="Pollard J."/>
            <person name="Puri V."/>
            <person name="Reese M.G."/>
            <person name="Reinert K."/>
            <person name="Remington K."/>
            <person name="Saunders R.D.C."/>
            <person name="Scheeler F."/>
            <person name="Shen H."/>
            <person name="Shue B.C."/>
            <person name="Siden-Kiamos I."/>
            <person name="Simpson M."/>
            <person name="Skupski M.P."/>
            <person name="Smith T.J."/>
            <person name="Spier E."/>
            <person name="Spradling A.C."/>
            <person name="Stapleton M."/>
            <person name="Strong R."/>
            <person name="Sun E."/>
            <person name="Svirskas R."/>
            <person name="Tector C."/>
            <person name="Turner R."/>
            <person name="Venter E."/>
            <person name="Wang A.H."/>
            <person name="Wang X."/>
            <person name="Wang Z.-Y."/>
            <person name="Wassarman D.A."/>
            <person name="Weinstock G.M."/>
            <person name="Weissenbach J."/>
            <person name="Williams S.M."/>
            <person name="Woodage T."/>
            <person name="Worley K.C."/>
            <person name="Wu D."/>
            <person name="Yang S."/>
            <person name="Yao Q.A."/>
            <person name="Ye J."/>
            <person name="Yeh R.-F."/>
            <person name="Zaveri J.S."/>
            <person name="Zhan M."/>
            <person name="Zhang G."/>
            <person name="Zhao Q."/>
            <person name="Zheng L."/>
            <person name="Zheng X.H."/>
            <person name="Zhong F.N."/>
            <person name="Zhong W."/>
            <person name="Zhou X."/>
            <person name="Zhu S.C."/>
            <person name="Zhu X."/>
            <person name="Smith H.O."/>
            <person name="Gibbs R.A."/>
            <person name="Myers E.W."/>
            <person name="Rubin G.M."/>
            <person name="Venter J.C."/>
        </authorList>
    </citation>
    <scope>NUCLEOTIDE SEQUENCE [LARGE SCALE GENOMIC DNA]</scope>
    <source>
        <strain>Berkeley</strain>
    </source>
</reference>
<reference key="3">
    <citation type="journal article" date="2002" name="Genome Biol.">
        <title>Annotation of the Drosophila melanogaster euchromatic genome: a systematic review.</title>
        <authorList>
            <person name="Misra S."/>
            <person name="Crosby M.A."/>
            <person name="Mungall C.J."/>
            <person name="Matthews B.B."/>
            <person name="Campbell K.S."/>
            <person name="Hradecky P."/>
            <person name="Huang Y."/>
            <person name="Kaminker J.S."/>
            <person name="Millburn G.H."/>
            <person name="Prochnik S.E."/>
            <person name="Smith C.D."/>
            <person name="Tupy J.L."/>
            <person name="Whitfield E.J."/>
            <person name="Bayraktaroglu L."/>
            <person name="Berman B.P."/>
            <person name="Bettencourt B.R."/>
            <person name="Celniker S.E."/>
            <person name="de Grey A.D.N.J."/>
            <person name="Drysdale R.A."/>
            <person name="Harris N.L."/>
            <person name="Richter J."/>
            <person name="Russo S."/>
            <person name="Schroeder A.J."/>
            <person name="Shu S.Q."/>
            <person name="Stapleton M."/>
            <person name="Yamada C."/>
            <person name="Ashburner M."/>
            <person name="Gelbart W.M."/>
            <person name="Rubin G.M."/>
            <person name="Lewis S.E."/>
        </authorList>
    </citation>
    <scope>GENOME REANNOTATION</scope>
    <source>
        <strain>Berkeley</strain>
    </source>
</reference>
<reference key="4">
    <citation type="journal article" date="2002" name="Genome Biol.">
        <title>A Drosophila full-length cDNA resource.</title>
        <authorList>
            <person name="Stapleton M."/>
            <person name="Carlson J.W."/>
            <person name="Brokstein P."/>
            <person name="Yu C."/>
            <person name="Champe M."/>
            <person name="George R.A."/>
            <person name="Guarin H."/>
            <person name="Kronmiller B."/>
            <person name="Pacleb J.M."/>
            <person name="Park S."/>
            <person name="Wan K.H."/>
            <person name="Rubin G.M."/>
            <person name="Celniker S.E."/>
        </authorList>
    </citation>
    <scope>NUCLEOTIDE SEQUENCE [LARGE SCALE MRNA]</scope>
    <source>
        <strain>Berkeley</strain>
        <tissue>Embryo</tissue>
    </source>
</reference>
<reference key="5">
    <citation type="submission" date="2011-10" db="EMBL/GenBank/DDBJ databases">
        <authorList>
            <person name="Stapleton M."/>
            <person name="Booth B."/>
            <person name="Carlson J.W."/>
            <person name="Frise E."/>
            <person name="Sandler J."/>
            <person name="Kapadia B."/>
            <person name="Park S."/>
            <person name="Wan K.H."/>
            <person name="Yu C."/>
            <person name="Celniker S.E."/>
        </authorList>
    </citation>
    <scope>NUCLEOTIDE SEQUENCE [LARGE SCALE MRNA]</scope>
    <source>
        <strain>Berkeley</strain>
    </source>
</reference>
<reference key="6">
    <citation type="journal article" date="2003" name="Biochem. J.">
        <title>Expanded substrate screenings of human and Drosophila type 10 17beta-hydroxysteroid dehydrogenases (HSDs) reveal multiple specificities in bile acid and steroid hormone metabolism: characterization of multifunctional 3alpha/7alpha/7beta/17beta/20beta/21-HSD.</title>
        <authorList>
            <person name="Shafqat N."/>
            <person name="Marschall H.U."/>
            <person name="Filling C."/>
            <person name="Nordling E."/>
            <person name="Wu X.Q."/>
            <person name="Bjork L."/>
            <person name="Thyberg J."/>
            <person name="Martensson E."/>
            <person name="Salim S."/>
            <person name="Jornvall H."/>
            <person name="Oppermann U."/>
        </authorList>
    </citation>
    <scope>FUNCTION</scope>
    <scope>CATALYTIC ACTIVITY</scope>
    <scope>BIOPHYSICOCHEMICAL PROPERTIES</scope>
</reference>
<reference key="7">
    <citation type="journal article" date="2006" name="Curr. Biol.">
        <title>The lipid-droplet proteome reveals that droplets are a protein-storage depot.</title>
        <authorList>
            <person name="Cermelli S."/>
            <person name="Guo Y."/>
            <person name="Gross S.P."/>
            <person name="Welte M.A."/>
        </authorList>
    </citation>
    <scope>IDENTIFICATION BY MASS SPECTROMETRY</scope>
    <scope>SUBCELLULAR LOCATION</scope>
</reference>
<reference key="8">
    <citation type="journal article" date="2007" name="J. Proteome Res.">
        <title>Proteomic identification of PKC-mediated expression of 20E-induced protein in Drosophila melanogaster.</title>
        <authorList>
            <person name="Sun Y."/>
            <person name="An S."/>
            <person name="Henrich V.C."/>
            <person name="Sun X."/>
            <person name="Song Q."/>
        </authorList>
    </citation>
    <scope>IDENTIFICATION BY MASS SPECTROMETRY</scope>
    <scope>INDUCTION BY 20-HYDROXYECDYSONE</scope>
</reference>
<reference key="9">
    <citation type="journal article" date="2016" name="Nucleic Acids Res.">
        <title>Loss of the mitochondrial protein-only ribonuclease P complex causes aberrant tRNA processing and lethality in Drosophila.</title>
        <authorList>
            <person name="Sen A."/>
            <person name="Karasik A."/>
            <person name="Shanmuganathan A."/>
            <person name="Mirkovic E."/>
            <person name="Koutmos M."/>
            <person name="Cox R.T."/>
        </authorList>
    </citation>
    <scope>FUNCTION</scope>
    <scope>IDENTIFICATION IN THE MITOCHONDRIAL RIBONUCLEASE P COMPLEX</scope>
    <scope>SUBCELLULAR LOCATION</scope>
    <scope>DISRUPTION PHENOTYPE</scope>
    <scope>MUTAGENESIS OF GLN-159 AND SER-163</scope>
</reference>
<reference key="10">
    <citation type="journal article" date="2021" name="Int. J. Mol. Sci.">
        <title>Loss of Individual Mitochondrial Ribonuclease P Complex Proteins Differentially Affects Mitochondrial tRNA Processing In Vivo.</title>
        <authorList>
            <person name="Saoji M."/>
            <person name="Sen A."/>
            <person name="Cox R.T."/>
        </authorList>
    </citation>
    <scope>FUNCTION</scope>
    <scope>SUBCELLULAR LOCATION</scope>
    <scope>DISRUPTION PHENOTYPE</scope>
    <scope>MUTAGENESIS OF GLN-159 AND SER-163</scope>
</reference>
<reference key="11">
    <citation type="journal article" date="2022" name="Front. Cell Dev. Biol.">
        <title>Reduction of Drosophila Mitochondrial RNase P in Skeletal and Heart Muscle Causes Muscle Degeneration, Cardiomyopathy, and Heart Arrhythmia.</title>
        <authorList>
            <person name="Saoji M."/>
            <person name="Petersen C.E."/>
            <person name="Sen A."/>
            <person name="Tripoli B.A."/>
            <person name="Smyth J.T."/>
            <person name="Cox R.T."/>
        </authorList>
    </citation>
    <scope>FUNCTION</scope>
    <scope>DISRUPTION PHENOTYPE</scope>
</reference>
<evidence type="ECO:0000250" key="1"/>
<evidence type="ECO:0000250" key="2">
    <source>
        <dbReference type="UniProtKB" id="Q99714"/>
    </source>
</evidence>
<evidence type="ECO:0000255" key="3">
    <source>
        <dbReference type="PROSITE-ProRule" id="PRU10001"/>
    </source>
</evidence>
<evidence type="ECO:0000269" key="4">
    <source>
    </source>
</evidence>
<evidence type="ECO:0000269" key="5">
    <source>
    </source>
</evidence>
<evidence type="ECO:0000269" key="6">
    <source>
    </source>
</evidence>
<evidence type="ECO:0000269" key="7">
    <source>
    </source>
</evidence>
<evidence type="ECO:0000269" key="8">
    <source>
    </source>
</evidence>
<evidence type="ECO:0000269" key="9">
    <source>
    </source>
</evidence>
<evidence type="ECO:0000269" key="10">
    <source>
    </source>
</evidence>
<evidence type="ECO:0000303" key="11">
    <source>
    </source>
</evidence>
<evidence type="ECO:0000303" key="12">
    <source>
    </source>
</evidence>
<evidence type="ECO:0000303" key="13">
    <source>
    </source>
</evidence>
<evidence type="ECO:0000305" key="14"/>
<evidence type="ECO:0000305" key="15">
    <source>
    </source>
</evidence>
<evidence type="ECO:0000305" key="16">
    <source>
    </source>
</evidence>
<evidence type="ECO:0000312" key="17">
    <source>
        <dbReference type="FlyBase" id="FBgn0021765"/>
    </source>
</evidence>
<feature type="chain" id="PRO_0000054813" description="3-hydroxyacyl-CoA dehydrogenase type-2">
    <location>
        <begin position="1"/>
        <end position="255"/>
    </location>
</feature>
<feature type="active site" description="Proton acceptor" evidence="3">
    <location>
        <position position="162"/>
    </location>
</feature>
<feature type="binding site" evidence="2">
    <location>
        <position position="14"/>
    </location>
    <ligand>
        <name>NAD(+)</name>
        <dbReference type="ChEBI" id="CHEBI:57540"/>
    </ligand>
</feature>
<feature type="binding site" evidence="2">
    <location>
        <position position="16"/>
    </location>
    <ligand>
        <name>NAD(+)</name>
        <dbReference type="ChEBI" id="CHEBI:57540"/>
    </ligand>
</feature>
<feature type="binding site" evidence="2">
    <location>
        <position position="35"/>
    </location>
    <ligand>
        <name>NAD(+)</name>
        <dbReference type="ChEBI" id="CHEBI:57540"/>
    </ligand>
</feature>
<feature type="binding site" evidence="2">
    <location>
        <position position="58"/>
    </location>
    <ligand>
        <name>NAD(+)</name>
        <dbReference type="ChEBI" id="CHEBI:57540"/>
    </ligand>
</feature>
<feature type="binding site" evidence="2">
    <location>
        <position position="59"/>
    </location>
    <ligand>
        <name>NAD(+)</name>
        <dbReference type="ChEBI" id="CHEBI:57540"/>
    </ligand>
</feature>
<feature type="binding site" evidence="2">
    <location>
        <position position="85"/>
    </location>
    <ligand>
        <name>NAD(+)</name>
        <dbReference type="ChEBI" id="CHEBI:57540"/>
    </ligand>
</feature>
<feature type="binding site" evidence="1">
    <location>
        <position position="149"/>
    </location>
    <ligand>
        <name>substrate</name>
    </ligand>
</feature>
<feature type="binding site" evidence="2">
    <location>
        <position position="162"/>
    </location>
    <ligand>
        <name>NAD(+)</name>
        <dbReference type="ChEBI" id="CHEBI:57540"/>
    </ligand>
</feature>
<feature type="binding site" evidence="2">
    <location>
        <position position="166"/>
    </location>
    <ligand>
        <name>NAD(+)</name>
        <dbReference type="ChEBI" id="CHEBI:57540"/>
    </ligand>
</feature>
<feature type="binding site" evidence="2">
    <location>
        <position position="195"/>
    </location>
    <ligand>
        <name>NAD(+)</name>
        <dbReference type="ChEBI" id="CHEBI:57540"/>
    </ligand>
</feature>
<feature type="binding site" evidence="2">
    <location>
        <position position="197"/>
    </location>
    <ligand>
        <name>NAD(+)</name>
        <dbReference type="ChEBI" id="CHEBI:57540"/>
    </ligand>
</feature>
<feature type="mutagenesis site" description="Lethal allele." evidence="10">
    <original>L</original>
    <variation>Q</variation>
    <location>
        <position position="33"/>
    </location>
</feature>
<feature type="mutagenesis site" description="Lethal allele." evidence="10">
    <original>F</original>
    <variation>I</variation>
    <location>
        <position position="120"/>
    </location>
</feature>
<feature type="mutagenesis site" description="Pupal lethal; pupation is developmentally delayed and pupae fail to enclose into adults. Larvae also display reduced levels of ATP, abnormal neuroblast mitochondrial morphology, and the accumulation of unprocessed mitochondrial tRNAs transcripts for tRNA(Ile), tRNA(Gly), tRNA(Val) and tRNA(Leu) (CUN)." evidence="7 8">
    <location>
        <position position="159"/>
    </location>
</feature>
<feature type="mutagenesis site" description="Pupal lethal; pupation is developmentally delayed and pupae fail to enclose into adults. Larvae also display reduced levels of ATP, abnormal neuroblast mitochondrial morphology, and the accumulation of unprocessed mitochondrial tRNAs transcripts for tRNA(Ile), tRNA(Gly), tRNA(Val) and tRNA(Leu) (CUN)." evidence="7 8">
    <original>S</original>
    <variation>F</variation>
    <location>
        <position position="163"/>
    </location>
</feature>
<feature type="sequence conflict" description="In Ref. 4; AAM51999." evidence="14" ref="4">
    <original>E</original>
    <variation>K</variation>
    <location>
        <position position="134"/>
    </location>
</feature>
<dbReference type="EC" id="1.1.1.35" evidence="4"/>
<dbReference type="EC" id="1.1.1.51" evidence="4"/>
<dbReference type="EC" id="1.1.1.62" evidence="4"/>
<dbReference type="EC" id="1.1.1.-" evidence="4"/>
<dbReference type="EC" id="1.1.1.53" evidence="4"/>
<dbReference type="EMBL" id="Y15102">
    <property type="protein sequence ID" value="CAA75377.1"/>
    <property type="molecule type" value="mRNA"/>
</dbReference>
<dbReference type="EMBL" id="AE014298">
    <property type="protein sequence ID" value="AAF48797.1"/>
    <property type="molecule type" value="Genomic_DNA"/>
</dbReference>
<dbReference type="EMBL" id="AE014298">
    <property type="protein sequence ID" value="AFH07442.1"/>
    <property type="status" value="ALT_INIT"/>
    <property type="molecule type" value="Genomic_DNA"/>
</dbReference>
<dbReference type="EMBL" id="AY121672">
    <property type="protein sequence ID" value="AAM51999.1"/>
    <property type="molecule type" value="mRNA"/>
</dbReference>
<dbReference type="EMBL" id="BT029045">
    <property type="protein sequence ID" value="ABJ16978.1"/>
    <property type="molecule type" value="mRNA"/>
</dbReference>
<dbReference type="EMBL" id="BT122199">
    <property type="protein sequence ID" value="ADE60673.1"/>
    <property type="status" value="ALT_INIT"/>
    <property type="molecule type" value="mRNA"/>
</dbReference>
<dbReference type="EMBL" id="BT132763">
    <property type="protein sequence ID" value="AET07646.1"/>
    <property type="status" value="ALT_INIT"/>
    <property type="molecule type" value="mRNA"/>
</dbReference>
<dbReference type="RefSeq" id="NP_001245729.1">
    <property type="nucleotide sequence ID" value="NM_001258800.2"/>
</dbReference>
<dbReference type="RefSeq" id="NP_523396.1">
    <property type="nucleotide sequence ID" value="NM_078672.5"/>
</dbReference>
<dbReference type="SMR" id="O18404"/>
<dbReference type="BioGRID" id="59109">
    <property type="interactions" value="81"/>
</dbReference>
<dbReference type="ComplexPortal" id="CPX-2632">
    <property type="entry name" value="Mitochondrial ribonuclease P complex"/>
</dbReference>
<dbReference type="DIP" id="DIP-17092N"/>
<dbReference type="FunCoup" id="O18404">
    <property type="interactions" value="608"/>
</dbReference>
<dbReference type="IntAct" id="O18404">
    <property type="interactions" value="163"/>
</dbReference>
<dbReference type="STRING" id="7227.FBpp0074285"/>
<dbReference type="SwissLipids" id="SLP:000000795"/>
<dbReference type="PaxDb" id="7227-FBpp0074285"/>
<dbReference type="DNASU" id="32789"/>
<dbReference type="EnsemblMetazoa" id="FBtr0074511">
    <property type="protein sequence ID" value="FBpp0074285"/>
    <property type="gene ID" value="FBgn0021765"/>
</dbReference>
<dbReference type="EnsemblMetazoa" id="FBtr0308351">
    <property type="protein sequence ID" value="FBpp0300670"/>
    <property type="gene ID" value="FBgn0021765"/>
</dbReference>
<dbReference type="GeneID" id="32789"/>
<dbReference type="KEGG" id="dme:Dmel_CG7113"/>
<dbReference type="AGR" id="FB:FBgn0021765"/>
<dbReference type="CTD" id="32789"/>
<dbReference type="FlyBase" id="FBgn0021765">
    <property type="gene designation" value="scu"/>
</dbReference>
<dbReference type="VEuPathDB" id="VectorBase:FBgn0021765"/>
<dbReference type="eggNOG" id="KOG1199">
    <property type="taxonomic scope" value="Eukaryota"/>
</dbReference>
<dbReference type="GeneTree" id="ENSGT00940000155170"/>
<dbReference type="HOGENOM" id="CLU_010194_42_0_1"/>
<dbReference type="InParanoid" id="O18404"/>
<dbReference type="OMA" id="RHIFEND"/>
<dbReference type="OrthoDB" id="1274115at2759"/>
<dbReference type="PhylomeDB" id="O18404"/>
<dbReference type="Reactome" id="R-DME-70895">
    <property type="pathway name" value="Branched-chain amino acid catabolism"/>
</dbReference>
<dbReference type="Reactome" id="R-DME-9837999">
    <property type="pathway name" value="Mitochondrial protein degradation"/>
</dbReference>
<dbReference type="SignaLink" id="O18404"/>
<dbReference type="BioGRID-ORCS" id="32789">
    <property type="hits" value="0 hits in 1 CRISPR screen"/>
</dbReference>
<dbReference type="ChiTaRS" id="scu">
    <property type="organism name" value="fly"/>
</dbReference>
<dbReference type="GenomeRNAi" id="32789"/>
<dbReference type="PRO" id="PR:O18404"/>
<dbReference type="Proteomes" id="UP000000803">
    <property type="component" value="Chromosome X"/>
</dbReference>
<dbReference type="Bgee" id="FBgn0021765">
    <property type="expression patterns" value="Expressed in adult enteroendocrine precursor cell in adult midgut (Drosophila) and 206 other cell types or tissues"/>
</dbReference>
<dbReference type="ExpressionAtlas" id="O18404">
    <property type="expression patterns" value="baseline and differential"/>
</dbReference>
<dbReference type="GO" id="GO:0030678">
    <property type="term" value="C:mitochondrial ribonuclease P complex"/>
    <property type="evidence" value="ECO:0000314"/>
    <property type="project" value="FlyBase"/>
</dbReference>
<dbReference type="GO" id="GO:0005739">
    <property type="term" value="C:mitochondrion"/>
    <property type="evidence" value="ECO:0000314"/>
    <property type="project" value="UniProtKB"/>
</dbReference>
<dbReference type="GO" id="GO:0047015">
    <property type="term" value="F:3-hydroxy-2-methylbutyryl-CoA dehydrogenase activity"/>
    <property type="evidence" value="ECO:0007669"/>
    <property type="project" value="UniProtKB-EC"/>
</dbReference>
<dbReference type="GO" id="GO:0003857">
    <property type="term" value="F:3-hydroxyacyl-CoA dehydrogenase activity"/>
    <property type="evidence" value="ECO:0007669"/>
    <property type="project" value="UniProtKB-EC"/>
</dbReference>
<dbReference type="GO" id="GO:0047022">
    <property type="term" value="F:7-beta-hydroxysteroid dehydrogenase (NADP+) activity"/>
    <property type="evidence" value="ECO:0000314"/>
    <property type="project" value="FlyBase"/>
</dbReference>
<dbReference type="GO" id="GO:0018454">
    <property type="term" value="F:acetoacetyl-CoA reductase activity"/>
    <property type="evidence" value="ECO:0000314"/>
    <property type="project" value="FlyBase"/>
</dbReference>
<dbReference type="GO" id="GO:0004303">
    <property type="term" value="F:estradiol 17-beta-dehydrogenase [NAD(P)+] activity"/>
    <property type="evidence" value="ECO:0000314"/>
    <property type="project" value="FlyBase"/>
</dbReference>
<dbReference type="GO" id="GO:0106282">
    <property type="term" value="F:isoursodeoxycholate 7-beta-dehydrogenase (NAD+) activity"/>
    <property type="evidence" value="ECO:0007669"/>
    <property type="project" value="RHEA"/>
</dbReference>
<dbReference type="GO" id="GO:0016229">
    <property type="term" value="F:steroid dehydrogenase activity"/>
    <property type="evidence" value="ECO:0000314"/>
    <property type="project" value="FlyBase"/>
</dbReference>
<dbReference type="GO" id="GO:0047035">
    <property type="term" value="F:testosterone dehydrogenase (NAD+) activity"/>
    <property type="evidence" value="ECO:0000314"/>
    <property type="project" value="FlyBase"/>
</dbReference>
<dbReference type="GO" id="GO:0106283">
    <property type="term" value="F:ursodeoxycholate 7-beta-dehydrogenase (NAD+) activity"/>
    <property type="evidence" value="ECO:0007669"/>
    <property type="project" value="RHEA"/>
</dbReference>
<dbReference type="GO" id="GO:0006637">
    <property type="term" value="P:acyl-CoA metabolic process"/>
    <property type="evidence" value="ECO:0000314"/>
    <property type="project" value="FlyBase"/>
</dbReference>
<dbReference type="GO" id="GO:0008209">
    <property type="term" value="P:androgen metabolic process"/>
    <property type="evidence" value="ECO:0000314"/>
    <property type="project" value="FlyBase"/>
</dbReference>
<dbReference type="GO" id="GO:0008205">
    <property type="term" value="P:ecdysone metabolic process"/>
    <property type="evidence" value="ECO:0000314"/>
    <property type="project" value="FlyBase"/>
</dbReference>
<dbReference type="GO" id="GO:0008210">
    <property type="term" value="P:estrogen metabolic process"/>
    <property type="evidence" value="ECO:0000314"/>
    <property type="project" value="FlyBase"/>
</dbReference>
<dbReference type="GO" id="GO:0006631">
    <property type="term" value="P:fatty acid metabolic process"/>
    <property type="evidence" value="ECO:0000314"/>
    <property type="project" value="FlyBase"/>
</dbReference>
<dbReference type="GO" id="GO:0090646">
    <property type="term" value="P:mitochondrial tRNA processing"/>
    <property type="evidence" value="ECO:0000315"/>
    <property type="project" value="FlyBase"/>
</dbReference>
<dbReference type="GO" id="GO:0008202">
    <property type="term" value="P:steroid metabolic process"/>
    <property type="evidence" value="ECO:0000314"/>
    <property type="project" value="FlyBase"/>
</dbReference>
<dbReference type="CDD" id="cd05371">
    <property type="entry name" value="HSD10-like_SDR_c"/>
    <property type="match status" value="1"/>
</dbReference>
<dbReference type="FunFam" id="3.40.50.720:FF:000215">
    <property type="entry name" value="3-hydroxyacyl-CoA dehydrogenase type-2"/>
    <property type="match status" value="1"/>
</dbReference>
<dbReference type="Gene3D" id="3.40.50.720">
    <property type="entry name" value="NAD(P)-binding Rossmann-like Domain"/>
    <property type="match status" value="1"/>
</dbReference>
<dbReference type="InterPro" id="IPR036291">
    <property type="entry name" value="NAD(P)-bd_dom_sf"/>
</dbReference>
<dbReference type="InterPro" id="IPR020904">
    <property type="entry name" value="Sc_DH/Rdtase_CS"/>
</dbReference>
<dbReference type="InterPro" id="IPR002347">
    <property type="entry name" value="SDR_fam"/>
</dbReference>
<dbReference type="PANTHER" id="PTHR43658:SF8">
    <property type="entry name" value="17-BETA-HYDROXYSTEROID DEHYDROGENASE 14-RELATED"/>
    <property type="match status" value="1"/>
</dbReference>
<dbReference type="PANTHER" id="PTHR43658">
    <property type="entry name" value="SHORT-CHAIN DEHYDROGENASE/REDUCTASE"/>
    <property type="match status" value="1"/>
</dbReference>
<dbReference type="Pfam" id="PF00106">
    <property type="entry name" value="adh_short"/>
    <property type="match status" value="1"/>
</dbReference>
<dbReference type="PRINTS" id="PR00081">
    <property type="entry name" value="GDHRDH"/>
</dbReference>
<dbReference type="PRINTS" id="PR00080">
    <property type="entry name" value="SDRFAMILY"/>
</dbReference>
<dbReference type="SMART" id="SM00822">
    <property type="entry name" value="PKS_KR"/>
    <property type="match status" value="1"/>
</dbReference>
<dbReference type="SUPFAM" id="SSF51735">
    <property type="entry name" value="NAD(P)-binding Rossmann-fold domains"/>
    <property type="match status" value="1"/>
</dbReference>
<dbReference type="PROSITE" id="PS00061">
    <property type="entry name" value="ADH_SHORT"/>
    <property type="match status" value="1"/>
</dbReference>
<protein>
    <recommendedName>
        <fullName evidence="13">3-hydroxyacyl-CoA dehydrogenase type-2</fullName>
        <ecNumber evidence="4">1.1.1.35</ecNumber>
    </recommendedName>
    <alternativeName>
        <fullName>17-beta-hydroxysteroid dehydrogenase 10</fullName>
        <shortName evidence="11">17-beta-HSD 10</shortName>
        <ecNumber evidence="4">1.1.1.51</ecNumber>
        <ecNumber evidence="4">1.1.1.62</ecNumber>
    </alternativeName>
    <alternativeName>
        <fullName>3-hydroxyacyl-CoA dehydrogenase type II</fullName>
    </alternativeName>
    <alternativeName>
        <fullName evidence="15">Hydroxysteroid dehydrogenase</fullName>
        <ecNumber evidence="4">1.1.1.-</ecNumber>
        <ecNumber evidence="4">1.1.1.53</ecNumber>
    </alternativeName>
    <alternativeName>
        <fullName>Mitochondrial ribonuclease P protein 2</fullName>
        <shortName>Mitochondrial RNase P protein 2</shortName>
    </alternativeName>
    <alternativeName>
        <fullName evidence="13">Scully protein</fullName>
    </alternativeName>
    <alternativeName>
        <fullName>Type II HADH</fullName>
    </alternativeName>
</protein>